<keyword id="KW-0238">DNA-binding</keyword>
<keyword id="KW-0479">Metal-binding</keyword>
<keyword id="KW-0539">Nucleus</keyword>
<keyword id="KW-1185">Reference proteome</keyword>
<keyword id="KW-0804">Transcription</keyword>
<keyword id="KW-0805">Transcription regulation</keyword>
<keyword id="KW-0862">Zinc</keyword>
<keyword id="KW-0863">Zinc-finger</keyword>
<accession>Q75LH6</accession>
<accession>B9F7F8</accession>
<accession>Q7Y147</accession>
<comment type="function">
    <text evidence="1">Trans-acting factor that binds specifically to the consensus nucleotide sequence 5'-TNCGTACAA-3'.</text>
</comment>
<comment type="subcellular location">
    <subcellularLocation>
        <location evidence="6">Nucleus</location>
    </subcellularLocation>
</comment>
<comment type="tissue specificity">
    <text evidence="5">Ubiquitous.</text>
</comment>
<comment type="domain">
    <text evidence="1">The SBP-type zinc finger is required for the binding to DNA.</text>
</comment>
<sequence length="969" mass="105604">MEAARVGAQSRHLYGGGLGEPDMDRRDKRLFGWDLNDWRWDSDRFVATPVPAAEASGLALNSSPSSSEEAGAASVRNVNARGDSDKRKRVVVIDDDDVEDDELVENGGGSLSLRIGGDAVAHGAGVGGGADEEDRNGKKIRVQGGSPSGPACQVEGCTADLTGVRDYHRRHKVCEMHAKATTAVVGNTVQRFCQQCSRFHPLQEFDEGKRSCRRRLAGHNRRRRKTRPEVAVGGSAFTEDKISSYLLLGLLGVCANLNADNAEHLRGQELISGLLRNLGAVAKSLDPKELCKLLEACQSMQDGSNAGTSETANALVNTAVAEAAGPSNSKMPFVNGDQCGLASSSVVPVQSKSPTVATPDPPACKFKDFDLNDTYGGMEGFEDGYEGSPTPAFKTTDSPNCPSWMHQDSTQSPPQTSGNSDSTSAQSLSSSNGDAQCRTDKIVFKLFEKVPSDLPPVLRSQILGWLSSSPTDIESYIRPGCIILTVYLRLVESAWKELSDNMSSYLDKLLNSSTGNFWASGLVFVMVRHQIAFMHNGQLMLDRPLANSAHHYCKILCVRPIAAPFSTKVNFRVEGLNLVSDSSRLICSFEGSCIFQEDTDNIVDDVEHDDIEYLNFCCPLPSSRGRGFVEVEDGGFSNGFFPFIIAEQDICSEVCELESIFESSSHEQADDDNARNQALEFLNELGWLLHRANIISKQDKVPLASFNIWRFRNLGIFAMEREWCAVTKLLLDFLFTGLVDIGSQSPEEVVLSENLLHAAVRMKSAQMVRFLLGYKPNESLKRTAETFLFRPDAQGPSKFTPLHIAAATDDAEDVLDALTNDPGLVGINTWRNARDGAGFTPEDYARQRGNDAYLNMVEKKINKHLGKGHVVLGVPSSIHPVITDGVKPGEVSLEIGMTVPPPAPSCNACSRQALMYPNSTARTFLYRPAMLTVMGIAVICVCVGLLLHTCPKVYAAPTFRWELLERGPM</sequence>
<organism>
    <name type="scientific">Oryza sativa subsp. japonica</name>
    <name type="common">Rice</name>
    <dbReference type="NCBI Taxonomy" id="39947"/>
    <lineage>
        <taxon>Eukaryota</taxon>
        <taxon>Viridiplantae</taxon>
        <taxon>Streptophyta</taxon>
        <taxon>Embryophyta</taxon>
        <taxon>Tracheophyta</taxon>
        <taxon>Spermatophyta</taxon>
        <taxon>Magnoliopsida</taxon>
        <taxon>Liliopsida</taxon>
        <taxon>Poales</taxon>
        <taxon>Poaceae</taxon>
        <taxon>BOP clade</taxon>
        <taxon>Oryzoideae</taxon>
        <taxon>Oryzeae</taxon>
        <taxon>Oryzinae</taxon>
        <taxon>Oryza</taxon>
        <taxon>Oryza sativa</taxon>
    </lineage>
</organism>
<evidence type="ECO:0000250" key="1"/>
<evidence type="ECO:0000255" key="2"/>
<evidence type="ECO:0000255" key="3">
    <source>
        <dbReference type="PROSITE-ProRule" id="PRU00470"/>
    </source>
</evidence>
<evidence type="ECO:0000256" key="4">
    <source>
        <dbReference type="SAM" id="MobiDB-lite"/>
    </source>
</evidence>
<evidence type="ECO:0000269" key="5">
    <source>
    </source>
</evidence>
<evidence type="ECO:0000305" key="6"/>
<evidence type="ECO:0000312" key="7">
    <source>
        <dbReference type="EMBL" id="EEE60245.1"/>
    </source>
</evidence>
<dbReference type="EMBL" id="AC092557">
    <property type="protein sequence ID" value="AAR88600.1"/>
    <property type="molecule type" value="Genomic_DNA"/>
</dbReference>
<dbReference type="EMBL" id="AC133339">
    <property type="protein sequence ID" value="AAP46238.1"/>
    <property type="molecule type" value="Genomic_DNA"/>
</dbReference>
<dbReference type="EMBL" id="DP000009">
    <property type="protein sequence ID" value="ABF99728.1"/>
    <property type="molecule type" value="Genomic_DNA"/>
</dbReference>
<dbReference type="EMBL" id="AP008209">
    <property type="protein sequence ID" value="BAF13722.1"/>
    <property type="molecule type" value="Genomic_DNA"/>
</dbReference>
<dbReference type="EMBL" id="AP014959">
    <property type="protein sequence ID" value="BAS87225.1"/>
    <property type="molecule type" value="Genomic_DNA"/>
</dbReference>
<dbReference type="EMBL" id="CM000140">
    <property type="protein sequence ID" value="EEE60245.1"/>
    <property type="molecule type" value="Genomic_DNA"/>
</dbReference>
<dbReference type="EMBL" id="AK069847">
    <property type="status" value="NOT_ANNOTATED_CDS"/>
    <property type="molecule type" value="mRNA"/>
</dbReference>
<dbReference type="RefSeq" id="XP_015631511.1">
    <property type="nucleotide sequence ID" value="XM_015776025.1"/>
</dbReference>
<dbReference type="SMR" id="Q75LH6"/>
<dbReference type="FunCoup" id="Q75LH6">
    <property type="interactions" value="2140"/>
</dbReference>
<dbReference type="STRING" id="39947.Q75LH6"/>
<dbReference type="PaxDb" id="39947-Q75LH6"/>
<dbReference type="EnsemblPlants" id="Os03t0833300-02">
    <property type="protein sequence ID" value="Os03t0833300-02"/>
    <property type="gene ID" value="Os03g0833300"/>
</dbReference>
<dbReference type="Gramene" id="Os03t0833300-02">
    <property type="protein sequence ID" value="Os03t0833300-02"/>
    <property type="gene ID" value="Os03g0833300"/>
</dbReference>
<dbReference type="KEGG" id="dosa:Os03g0833300"/>
<dbReference type="eggNOG" id="ENOG502QS71">
    <property type="taxonomic scope" value="Eukaryota"/>
</dbReference>
<dbReference type="HOGENOM" id="CLU_006255_3_0_1"/>
<dbReference type="InParanoid" id="Q75LH6"/>
<dbReference type="OMA" id="CEQKLAY"/>
<dbReference type="OrthoDB" id="514967at2759"/>
<dbReference type="Proteomes" id="UP000000763">
    <property type="component" value="Chromosome 3"/>
</dbReference>
<dbReference type="Proteomes" id="UP000007752">
    <property type="component" value="Chromosome 3"/>
</dbReference>
<dbReference type="Proteomes" id="UP000059680">
    <property type="component" value="Chromosome 3"/>
</dbReference>
<dbReference type="ExpressionAtlas" id="Q75LH6">
    <property type="expression patterns" value="baseline and differential"/>
</dbReference>
<dbReference type="GO" id="GO:0005634">
    <property type="term" value="C:nucleus"/>
    <property type="evidence" value="ECO:0007669"/>
    <property type="project" value="UniProtKB-SubCell"/>
</dbReference>
<dbReference type="GO" id="GO:0003677">
    <property type="term" value="F:DNA binding"/>
    <property type="evidence" value="ECO:0007669"/>
    <property type="project" value="UniProtKB-KW"/>
</dbReference>
<dbReference type="GO" id="GO:0008270">
    <property type="term" value="F:zinc ion binding"/>
    <property type="evidence" value="ECO:0007669"/>
    <property type="project" value="UniProtKB-KW"/>
</dbReference>
<dbReference type="FunFam" id="4.10.1100.10:FF:000001">
    <property type="entry name" value="Squamosa promoter-binding-like protein 14"/>
    <property type="match status" value="1"/>
</dbReference>
<dbReference type="Gene3D" id="1.25.40.20">
    <property type="entry name" value="Ankyrin repeat-containing domain"/>
    <property type="match status" value="1"/>
</dbReference>
<dbReference type="Gene3D" id="4.10.1100.10">
    <property type="entry name" value="Transcription factor, SBP-box domain"/>
    <property type="match status" value="1"/>
</dbReference>
<dbReference type="InterPro" id="IPR036770">
    <property type="entry name" value="Ankyrin_rpt-contain_sf"/>
</dbReference>
<dbReference type="InterPro" id="IPR044817">
    <property type="entry name" value="SBP-like"/>
</dbReference>
<dbReference type="InterPro" id="IPR004333">
    <property type="entry name" value="SBP_dom"/>
</dbReference>
<dbReference type="InterPro" id="IPR036893">
    <property type="entry name" value="SBP_sf"/>
</dbReference>
<dbReference type="PANTHER" id="PTHR31251">
    <property type="entry name" value="SQUAMOSA PROMOTER-BINDING-LIKE PROTEIN 4"/>
    <property type="match status" value="1"/>
</dbReference>
<dbReference type="PANTHER" id="PTHR31251:SF230">
    <property type="entry name" value="SQUAMOSA PROMOTER-BINDING-LIKE PROTEIN 6"/>
    <property type="match status" value="1"/>
</dbReference>
<dbReference type="Pfam" id="PF03110">
    <property type="entry name" value="SBP"/>
    <property type="match status" value="1"/>
</dbReference>
<dbReference type="SUPFAM" id="SSF48403">
    <property type="entry name" value="Ankyrin repeat"/>
    <property type="match status" value="1"/>
</dbReference>
<dbReference type="SUPFAM" id="SSF103612">
    <property type="entry name" value="SBT domain"/>
    <property type="match status" value="1"/>
</dbReference>
<dbReference type="PROSITE" id="PS51141">
    <property type="entry name" value="ZF_SBP"/>
    <property type="match status" value="1"/>
</dbReference>
<feature type="chain" id="PRO_0000308229" description="Squamosa promoter-binding-like protein 6">
    <location>
        <begin position="1"/>
        <end position="969"/>
    </location>
</feature>
<feature type="zinc finger region" description="SBP-type" evidence="3">
    <location>
        <begin position="149"/>
        <end position="226"/>
    </location>
</feature>
<feature type="region of interest" description="Disordered" evidence="4">
    <location>
        <begin position="1"/>
        <end position="25"/>
    </location>
</feature>
<feature type="region of interest" description="Disordered" evidence="4">
    <location>
        <begin position="54"/>
        <end position="81"/>
    </location>
</feature>
<feature type="region of interest" description="Disordered" evidence="4">
    <location>
        <begin position="377"/>
        <end position="434"/>
    </location>
</feature>
<feature type="short sequence motif" description="Bipartite nuclear localization signal" evidence="2">
    <location>
        <begin position="209"/>
        <end position="225"/>
    </location>
</feature>
<feature type="compositionally biased region" description="Low complexity" evidence="4">
    <location>
        <begin position="55"/>
        <end position="74"/>
    </location>
</feature>
<feature type="compositionally biased region" description="Polar residues" evidence="4">
    <location>
        <begin position="393"/>
        <end position="419"/>
    </location>
</feature>
<feature type="compositionally biased region" description="Low complexity" evidence="4">
    <location>
        <begin position="420"/>
        <end position="431"/>
    </location>
</feature>
<feature type="binding site" evidence="3">
    <location>
        <position position="152"/>
    </location>
    <ligand>
        <name>Zn(2+)</name>
        <dbReference type="ChEBI" id="CHEBI:29105"/>
        <label>1</label>
    </ligand>
</feature>
<feature type="binding site" evidence="3">
    <location>
        <position position="157"/>
    </location>
    <ligand>
        <name>Zn(2+)</name>
        <dbReference type="ChEBI" id="CHEBI:29105"/>
        <label>1</label>
    </ligand>
</feature>
<feature type="binding site" evidence="3">
    <location>
        <position position="174"/>
    </location>
    <ligand>
        <name>Zn(2+)</name>
        <dbReference type="ChEBI" id="CHEBI:29105"/>
        <label>1</label>
    </ligand>
</feature>
<feature type="binding site" evidence="3">
    <location>
        <position position="177"/>
    </location>
    <ligand>
        <name>Zn(2+)</name>
        <dbReference type="ChEBI" id="CHEBI:29105"/>
        <label>1</label>
    </ligand>
</feature>
<feature type="binding site" evidence="3">
    <location>
        <position position="193"/>
    </location>
    <ligand>
        <name>Zn(2+)</name>
        <dbReference type="ChEBI" id="CHEBI:29105"/>
        <label>2</label>
    </ligand>
</feature>
<feature type="binding site" evidence="3">
    <location>
        <position position="196"/>
    </location>
    <ligand>
        <name>Zn(2+)</name>
        <dbReference type="ChEBI" id="CHEBI:29105"/>
        <label>2</label>
    </ligand>
</feature>
<feature type="binding site" evidence="3">
    <location>
        <position position="200"/>
    </location>
    <ligand>
        <name>Zn(2+)</name>
        <dbReference type="ChEBI" id="CHEBI:29105"/>
        <label>2</label>
    </ligand>
</feature>
<feature type="binding site" evidence="3">
    <location>
        <position position="212"/>
    </location>
    <ligand>
        <name>Zn(2+)</name>
        <dbReference type="ChEBI" id="CHEBI:29105"/>
        <label>2</label>
    </ligand>
</feature>
<feature type="sequence conflict" description="In Ref. 6; AK069847." evidence="6" ref="6">
    <original>N</original>
    <variation>K</variation>
    <location>
        <position position="601"/>
    </location>
</feature>
<gene>
    <name type="primary">SPL6</name>
    <name type="ordered locus">Os03g0833300</name>
    <name type="ordered locus">LOC_Os03g61760</name>
    <name evidence="7" type="ORF">OsJ_13251</name>
    <name type="ORF">OSJNBa0078D06.37</name>
    <name type="ORF">OSJNBa0096I06.31</name>
</gene>
<proteinExistence type="evidence at transcript level"/>
<protein>
    <recommendedName>
        <fullName>Squamosa promoter-binding-like protein 6</fullName>
    </recommendedName>
</protein>
<reference key="1">
    <citation type="journal article" date="2005" name="Genome Res.">
        <title>Sequence, annotation, and analysis of synteny between rice chromosome 3 and diverged grass species.</title>
        <authorList>
            <consortium name="The rice chromosome 3 sequencing consortium"/>
            <person name="Buell C.R."/>
            <person name="Yuan Q."/>
            <person name="Ouyang S."/>
            <person name="Liu J."/>
            <person name="Zhu W."/>
            <person name="Wang A."/>
            <person name="Maiti R."/>
            <person name="Haas B."/>
            <person name="Wortman J."/>
            <person name="Pertea M."/>
            <person name="Jones K.M."/>
            <person name="Kim M."/>
            <person name="Overton L."/>
            <person name="Tsitrin T."/>
            <person name="Fadrosh D."/>
            <person name="Bera J."/>
            <person name="Weaver B."/>
            <person name="Jin S."/>
            <person name="Johri S."/>
            <person name="Reardon M."/>
            <person name="Webb K."/>
            <person name="Hill J."/>
            <person name="Moffat K."/>
            <person name="Tallon L."/>
            <person name="Van Aken S."/>
            <person name="Lewis M."/>
            <person name="Utterback T."/>
            <person name="Feldblyum T."/>
            <person name="Zismann V."/>
            <person name="Iobst S."/>
            <person name="Hsiao J."/>
            <person name="de Vazeille A.R."/>
            <person name="Salzberg S.L."/>
            <person name="White O."/>
            <person name="Fraser C.M."/>
            <person name="Yu Y."/>
            <person name="Kim H."/>
            <person name="Rambo T."/>
            <person name="Currie J."/>
            <person name="Collura K."/>
            <person name="Kernodle-Thompson S."/>
            <person name="Wei F."/>
            <person name="Kudrna K."/>
            <person name="Ammiraju J.S.S."/>
            <person name="Luo M."/>
            <person name="Goicoechea J.L."/>
            <person name="Wing R.A."/>
            <person name="Henry D."/>
            <person name="Oates R."/>
            <person name="Palmer M."/>
            <person name="Pries G."/>
            <person name="Saski C."/>
            <person name="Simmons J."/>
            <person name="Soderlund C."/>
            <person name="Nelson W."/>
            <person name="de la Bastide M."/>
            <person name="Spiegel L."/>
            <person name="Nascimento L."/>
            <person name="Huang E."/>
            <person name="Preston R."/>
            <person name="Zutavern T."/>
            <person name="Palmer L."/>
            <person name="O'Shaughnessy A."/>
            <person name="Dike S."/>
            <person name="McCombie W.R."/>
            <person name="Minx P."/>
            <person name="Cordum H."/>
            <person name="Wilson R."/>
            <person name="Jin W."/>
            <person name="Lee H.R."/>
            <person name="Jiang J."/>
            <person name="Jackson S."/>
        </authorList>
    </citation>
    <scope>NUCLEOTIDE SEQUENCE [LARGE SCALE GENOMIC DNA]</scope>
    <source>
        <strain>cv. Nipponbare</strain>
    </source>
</reference>
<reference key="2">
    <citation type="journal article" date="2005" name="Nature">
        <title>The map-based sequence of the rice genome.</title>
        <authorList>
            <consortium name="International rice genome sequencing project (IRGSP)"/>
        </authorList>
    </citation>
    <scope>NUCLEOTIDE SEQUENCE [LARGE SCALE GENOMIC DNA]</scope>
    <source>
        <strain>cv. Nipponbare</strain>
    </source>
</reference>
<reference key="3">
    <citation type="journal article" date="2008" name="Nucleic Acids Res.">
        <title>The rice annotation project database (RAP-DB): 2008 update.</title>
        <authorList>
            <consortium name="The rice annotation project (RAP)"/>
        </authorList>
    </citation>
    <scope>GENOME REANNOTATION</scope>
    <source>
        <strain>cv. Nipponbare</strain>
    </source>
</reference>
<reference key="4">
    <citation type="journal article" date="2013" name="Rice">
        <title>Improvement of the Oryza sativa Nipponbare reference genome using next generation sequence and optical map data.</title>
        <authorList>
            <person name="Kawahara Y."/>
            <person name="de la Bastide M."/>
            <person name="Hamilton J.P."/>
            <person name="Kanamori H."/>
            <person name="McCombie W.R."/>
            <person name="Ouyang S."/>
            <person name="Schwartz D.C."/>
            <person name="Tanaka T."/>
            <person name="Wu J."/>
            <person name="Zhou S."/>
            <person name="Childs K.L."/>
            <person name="Davidson R.M."/>
            <person name="Lin H."/>
            <person name="Quesada-Ocampo L."/>
            <person name="Vaillancourt B."/>
            <person name="Sakai H."/>
            <person name="Lee S.S."/>
            <person name="Kim J."/>
            <person name="Numa H."/>
            <person name="Itoh T."/>
            <person name="Buell C.R."/>
            <person name="Matsumoto T."/>
        </authorList>
    </citation>
    <scope>GENOME REANNOTATION</scope>
    <source>
        <strain>cv. Nipponbare</strain>
    </source>
</reference>
<reference key="5">
    <citation type="journal article" date="2005" name="PLoS Biol.">
        <title>The genomes of Oryza sativa: a history of duplications.</title>
        <authorList>
            <person name="Yu J."/>
            <person name="Wang J."/>
            <person name="Lin W."/>
            <person name="Li S."/>
            <person name="Li H."/>
            <person name="Zhou J."/>
            <person name="Ni P."/>
            <person name="Dong W."/>
            <person name="Hu S."/>
            <person name="Zeng C."/>
            <person name="Zhang J."/>
            <person name="Zhang Y."/>
            <person name="Li R."/>
            <person name="Xu Z."/>
            <person name="Li S."/>
            <person name="Li X."/>
            <person name="Zheng H."/>
            <person name="Cong L."/>
            <person name="Lin L."/>
            <person name="Yin J."/>
            <person name="Geng J."/>
            <person name="Li G."/>
            <person name="Shi J."/>
            <person name="Liu J."/>
            <person name="Lv H."/>
            <person name="Li J."/>
            <person name="Wang J."/>
            <person name="Deng Y."/>
            <person name="Ran L."/>
            <person name="Shi X."/>
            <person name="Wang X."/>
            <person name="Wu Q."/>
            <person name="Li C."/>
            <person name="Ren X."/>
            <person name="Wang J."/>
            <person name="Wang X."/>
            <person name="Li D."/>
            <person name="Liu D."/>
            <person name="Zhang X."/>
            <person name="Ji Z."/>
            <person name="Zhao W."/>
            <person name="Sun Y."/>
            <person name="Zhang Z."/>
            <person name="Bao J."/>
            <person name="Han Y."/>
            <person name="Dong L."/>
            <person name="Ji J."/>
            <person name="Chen P."/>
            <person name="Wu S."/>
            <person name="Liu J."/>
            <person name="Xiao Y."/>
            <person name="Bu D."/>
            <person name="Tan J."/>
            <person name="Yang L."/>
            <person name="Ye C."/>
            <person name="Zhang J."/>
            <person name="Xu J."/>
            <person name="Zhou Y."/>
            <person name="Yu Y."/>
            <person name="Zhang B."/>
            <person name="Zhuang S."/>
            <person name="Wei H."/>
            <person name="Liu B."/>
            <person name="Lei M."/>
            <person name="Yu H."/>
            <person name="Li Y."/>
            <person name="Xu H."/>
            <person name="Wei S."/>
            <person name="He X."/>
            <person name="Fang L."/>
            <person name="Zhang Z."/>
            <person name="Zhang Y."/>
            <person name="Huang X."/>
            <person name="Su Z."/>
            <person name="Tong W."/>
            <person name="Li J."/>
            <person name="Tong Z."/>
            <person name="Li S."/>
            <person name="Ye J."/>
            <person name="Wang L."/>
            <person name="Fang L."/>
            <person name="Lei T."/>
            <person name="Chen C.-S."/>
            <person name="Chen H.-C."/>
            <person name="Xu Z."/>
            <person name="Li H."/>
            <person name="Huang H."/>
            <person name="Zhang F."/>
            <person name="Xu H."/>
            <person name="Li N."/>
            <person name="Zhao C."/>
            <person name="Li S."/>
            <person name="Dong L."/>
            <person name="Huang Y."/>
            <person name="Li L."/>
            <person name="Xi Y."/>
            <person name="Qi Q."/>
            <person name="Li W."/>
            <person name="Zhang B."/>
            <person name="Hu W."/>
            <person name="Zhang Y."/>
            <person name="Tian X."/>
            <person name="Jiao Y."/>
            <person name="Liang X."/>
            <person name="Jin J."/>
            <person name="Gao L."/>
            <person name="Zheng W."/>
            <person name="Hao B."/>
            <person name="Liu S.-M."/>
            <person name="Wang W."/>
            <person name="Yuan L."/>
            <person name="Cao M."/>
            <person name="McDermott J."/>
            <person name="Samudrala R."/>
            <person name="Wang J."/>
            <person name="Wong G.K.-S."/>
            <person name="Yang H."/>
        </authorList>
    </citation>
    <scope>NUCLEOTIDE SEQUENCE [LARGE SCALE GENOMIC DNA]</scope>
    <source>
        <strain>cv. Nipponbare</strain>
    </source>
</reference>
<reference key="6">
    <citation type="journal article" date="2003" name="Science">
        <title>Collection, mapping, and annotation of over 28,000 cDNA clones from japonica rice.</title>
        <authorList>
            <consortium name="The rice full-length cDNA consortium"/>
        </authorList>
    </citation>
    <scope>NUCLEOTIDE SEQUENCE [LARGE SCALE MRNA]</scope>
    <source>
        <strain>cv. Nipponbare</strain>
    </source>
</reference>
<reference key="7">
    <citation type="journal article" date="2006" name="Plant Physiol.">
        <title>Genomic organization, differential expression, and interaction of SQUAMOSA promoter-binding-like transcription factors and microRNA156 in rice.</title>
        <authorList>
            <person name="Xie K."/>
            <person name="Wu C."/>
            <person name="Xiong L."/>
        </authorList>
    </citation>
    <scope>TISSUE SPECIFICITY</scope>
    <scope>GENE FAMILY</scope>
    <scope>NOMENCLATURE</scope>
</reference>
<reference key="8">
    <citation type="journal article" date="2008" name="Gene">
        <title>Comparative study of SBP-box gene family in Arabidopsis and rice.</title>
        <authorList>
            <person name="Yang Z."/>
            <person name="Wang X."/>
            <person name="Gu S."/>
            <person name="Hu Z."/>
            <person name="Xu H."/>
            <person name="Xu C."/>
        </authorList>
    </citation>
    <scope>GENE FAMILY</scope>
</reference>
<name>SPL6_ORYSJ</name>